<organism>
    <name type="scientific">Bartonella quintana (strain Toulouse)</name>
    <name type="common">Rochalimaea quintana</name>
    <dbReference type="NCBI Taxonomy" id="283165"/>
    <lineage>
        <taxon>Bacteria</taxon>
        <taxon>Pseudomonadati</taxon>
        <taxon>Pseudomonadota</taxon>
        <taxon>Alphaproteobacteria</taxon>
        <taxon>Hyphomicrobiales</taxon>
        <taxon>Bartonellaceae</taxon>
        <taxon>Bartonella</taxon>
    </lineage>
</organism>
<name>Y270_BARQU</name>
<proteinExistence type="inferred from homology"/>
<gene>
    <name type="ordered locus">BQ02700</name>
</gene>
<protein>
    <recommendedName>
        <fullName>Putative ABC transporter ATP-binding protein BQ02700</fullName>
        <ecNumber>7.-.-.-</ecNumber>
    </recommendedName>
</protein>
<comment type="function">
    <text evidence="1">Probably part of an ABC transporter complex. Responsible for energy coupling to the transport system (By similarity).</text>
</comment>
<comment type="subcellular location">
    <subcellularLocation>
        <location evidence="1">Cell inner membrane</location>
        <topology evidence="1">Peripheral membrane protein</topology>
    </subcellularLocation>
</comment>
<comment type="similarity">
    <text evidence="3">Belongs to the ABC transporter superfamily.</text>
</comment>
<reference key="1">
    <citation type="journal article" date="2004" name="Proc. Natl. Acad. Sci. U.S.A.">
        <title>The louse-borne human pathogen Bartonella quintana is a genomic derivative of the zoonotic agent Bartonella henselae.</title>
        <authorList>
            <person name="Alsmark U.C.M."/>
            <person name="Frank A.C."/>
            <person name="Karlberg E.O."/>
            <person name="Legault B.-A."/>
            <person name="Ardell D.H."/>
            <person name="Canbaeck B."/>
            <person name="Eriksson A.-S."/>
            <person name="Naeslund A.K."/>
            <person name="Handley S.A."/>
            <person name="Huvet M."/>
            <person name="La Scola B."/>
            <person name="Holmberg M."/>
            <person name="Andersson S.G.E."/>
        </authorList>
    </citation>
    <scope>NUCLEOTIDE SEQUENCE [LARGE SCALE GENOMIC DNA]</scope>
    <source>
        <strain>Toulouse</strain>
    </source>
</reference>
<evidence type="ECO:0000250" key="1"/>
<evidence type="ECO:0000255" key="2">
    <source>
        <dbReference type="PROSITE-ProRule" id="PRU00434"/>
    </source>
</evidence>
<evidence type="ECO:0000305" key="3"/>
<keyword id="KW-0067">ATP-binding</keyword>
<keyword id="KW-0997">Cell inner membrane</keyword>
<keyword id="KW-1003">Cell membrane</keyword>
<keyword id="KW-0472">Membrane</keyword>
<keyword id="KW-0547">Nucleotide-binding</keyword>
<keyword id="KW-1278">Translocase</keyword>
<keyword id="KW-0813">Transport</keyword>
<dbReference type="EC" id="7.-.-.-"/>
<dbReference type="EMBL" id="BX897700">
    <property type="protein sequence ID" value="CAF25772.1"/>
    <property type="molecule type" value="Genomic_DNA"/>
</dbReference>
<dbReference type="RefSeq" id="WP_011179075.1">
    <property type="nucleotide sequence ID" value="NC_005955.1"/>
</dbReference>
<dbReference type="SMR" id="Q6G1D9"/>
<dbReference type="KEGG" id="bqu:BQ02700"/>
<dbReference type="eggNOG" id="COG1122">
    <property type="taxonomic scope" value="Bacteria"/>
</dbReference>
<dbReference type="HOGENOM" id="CLU_000604_1_22_5"/>
<dbReference type="OrthoDB" id="9782163at2"/>
<dbReference type="Proteomes" id="UP000000597">
    <property type="component" value="Chromosome"/>
</dbReference>
<dbReference type="GO" id="GO:0043190">
    <property type="term" value="C:ATP-binding cassette (ABC) transporter complex"/>
    <property type="evidence" value="ECO:0007669"/>
    <property type="project" value="TreeGrafter"/>
</dbReference>
<dbReference type="GO" id="GO:0005524">
    <property type="term" value="F:ATP binding"/>
    <property type="evidence" value="ECO:0007669"/>
    <property type="project" value="UniProtKB-KW"/>
</dbReference>
<dbReference type="GO" id="GO:0016887">
    <property type="term" value="F:ATP hydrolysis activity"/>
    <property type="evidence" value="ECO:0007669"/>
    <property type="project" value="InterPro"/>
</dbReference>
<dbReference type="GO" id="GO:0042626">
    <property type="term" value="F:ATPase-coupled transmembrane transporter activity"/>
    <property type="evidence" value="ECO:0007669"/>
    <property type="project" value="TreeGrafter"/>
</dbReference>
<dbReference type="CDD" id="cd03225">
    <property type="entry name" value="ABC_cobalt_CbiO_domain1"/>
    <property type="match status" value="1"/>
</dbReference>
<dbReference type="Gene3D" id="3.40.50.300">
    <property type="entry name" value="P-loop containing nucleotide triphosphate hydrolases"/>
    <property type="match status" value="1"/>
</dbReference>
<dbReference type="InterPro" id="IPR003593">
    <property type="entry name" value="AAA+_ATPase"/>
</dbReference>
<dbReference type="InterPro" id="IPR003439">
    <property type="entry name" value="ABC_transporter-like_ATP-bd"/>
</dbReference>
<dbReference type="InterPro" id="IPR017871">
    <property type="entry name" value="ABC_transporter-like_CS"/>
</dbReference>
<dbReference type="InterPro" id="IPR015856">
    <property type="entry name" value="ABC_transpr_CbiO/EcfA_su"/>
</dbReference>
<dbReference type="InterPro" id="IPR050095">
    <property type="entry name" value="ECF_ABC_transporter_ATP-bd"/>
</dbReference>
<dbReference type="InterPro" id="IPR027417">
    <property type="entry name" value="P-loop_NTPase"/>
</dbReference>
<dbReference type="PANTHER" id="PTHR43553:SF24">
    <property type="entry name" value="ENERGY-COUPLING FACTOR TRANSPORTER ATP-BINDING PROTEIN ECFA1"/>
    <property type="match status" value="1"/>
</dbReference>
<dbReference type="PANTHER" id="PTHR43553">
    <property type="entry name" value="HEAVY METAL TRANSPORTER"/>
    <property type="match status" value="1"/>
</dbReference>
<dbReference type="Pfam" id="PF00005">
    <property type="entry name" value="ABC_tran"/>
    <property type="match status" value="1"/>
</dbReference>
<dbReference type="SMART" id="SM00382">
    <property type="entry name" value="AAA"/>
    <property type="match status" value="1"/>
</dbReference>
<dbReference type="SUPFAM" id="SSF52540">
    <property type="entry name" value="P-loop containing nucleoside triphosphate hydrolases"/>
    <property type="match status" value="1"/>
</dbReference>
<dbReference type="PROSITE" id="PS00211">
    <property type="entry name" value="ABC_TRANSPORTER_1"/>
    <property type="match status" value="1"/>
</dbReference>
<dbReference type="PROSITE" id="PS50893">
    <property type="entry name" value="ABC_TRANSPORTER_2"/>
    <property type="match status" value="1"/>
</dbReference>
<accession>Q6G1D9</accession>
<sequence>MGIIKFDKVTQVFGDLCVLRDITVQLTEKRIAVIGANGSGKSTFVRLINGLQLPSNGFVSVDGLDTKRDAKAVKRKVGFVFQNPDNQIVLPLVEEDLSFGLKNLNLSKDEIKKRVDEILQRYDLQAFKNHAVHLLSGGQKQLVAISSVVAMKPDYIVFDEPTTLLDLRNKRRVTQVIEELPQTAIVVSHDLEFLKNFDRILVFDKGEIAIDDVPLVAIKEYIRRMS</sequence>
<feature type="chain" id="PRO_0000091990" description="Putative ABC transporter ATP-binding protein BQ02700">
    <location>
        <begin position="1"/>
        <end position="226"/>
    </location>
</feature>
<feature type="domain" description="ABC transporter" evidence="2">
    <location>
        <begin position="4"/>
        <end position="225"/>
    </location>
</feature>
<feature type="binding site" evidence="2">
    <location>
        <begin position="35"/>
        <end position="42"/>
    </location>
    <ligand>
        <name>ATP</name>
        <dbReference type="ChEBI" id="CHEBI:30616"/>
    </ligand>
</feature>